<sequence>MLAGRPGTRSAVGELGTESSDNLDRAPLGPRESGGHHRPGSYLDMKIHLEKNLEEERQILLQQQKICRNRARKYFVESNRRKKAFEEKRKEQEEKEHQIREQILQQRKQKFEEVTEKFQRAHVPLSQRRKAVSRKPVPPLEEALKQIQESNLKSEVNLPFSRRPTINWRAIDSALPSALSKNDHKHQKQLLSKINCEKEMNENMRATLATSKNVFQLKLEETQKLLEDQHLSNLQKFCDEVNQITNSETLSSIDSLEATEHEEIYLTLNKEHSTSIQRNTISLKPANMQSTNLSCFDEDKLAFSKTQHINNWLTNLDASNTQNVTAFSDILSKSNVLPSWEYFNSKEQNPSPLNGTVERATNTANNSVPFVSSPPMFVLDKKCEKTSETSTMRTTDSTSGAFKRERPLVTESPTFKFSKSQSTSDSLTQEVATFPDQEKYSELNQENGTTSIPTSCVPVATPLVLPSNIQSARPSAKNSIHIKEIDAVQCSDKLDELKDGKEEEIKYFNCNKEELPLFSDSFQDAYIPHNPDSKDEKQKLAETSSLSNVTSNYDFVGQHKKMKYNIHERNGVRFLKSILKKESKYEHGYLKALIINQSFKFGNQKAAAIRDSIELTKEKGAEIPKTIKKLRWFDETSNIENNAENSHSLKNKTGTTQQHSQQFHIQSGAGSNIISVSTCAVNSADTKKSREDSISENVTTLGGSGADHMPLNCFIPSGYNFAKHAWPASKKEESKIPVHDDSKTKQGKPQRGRAKIIRKPGSAKVQSGFICTNRKGAVIQPQSASKVNIFTQAQGKLIIPCPPPQSTSNIRSGKNIQVSQCQPVTPENPQNIITHNSFNSKHVLPTEHSLNQWNQESSSPLSNACSDLVTVIPSLPSYCSSECQTFAKINHSNGTQAVARQDATLYCTQRSPVCEESYPSVTLRTAEEESVPLWKRGPNVLHQNKRATGSTVMRRKRIAETKRRNILEQKRQNPGSVGQKYSEQINNFGQSVLLSSSEPKQTTRGTSYIEEVSDSTSEFLMAENLVKASVPEDEILTVLNSKQIQKSNLPLNKTQQFNICTLSAEEQKILESLNDLSERLHYIQESICKNPSIKNTLQIIPLLEKREDRTSSCRDKR</sequence>
<organism>
    <name type="scientific">Homo sapiens</name>
    <name type="common">Human</name>
    <dbReference type="NCBI Taxonomy" id="9606"/>
    <lineage>
        <taxon>Eukaryota</taxon>
        <taxon>Metazoa</taxon>
        <taxon>Chordata</taxon>
        <taxon>Craniata</taxon>
        <taxon>Vertebrata</taxon>
        <taxon>Euteleostomi</taxon>
        <taxon>Mammalia</taxon>
        <taxon>Eutheria</taxon>
        <taxon>Euarchontoglires</taxon>
        <taxon>Primates</taxon>
        <taxon>Haplorrhini</taxon>
        <taxon>Catarrhini</taxon>
        <taxon>Hominidae</taxon>
        <taxon>Homo</taxon>
    </lineage>
</organism>
<feature type="chain" id="PRO_0000248831" description="Centrosomal protein of 126 kDa">
    <location>
        <begin position="1"/>
        <end position="1117"/>
    </location>
</feature>
<feature type="region of interest" description="Disordered" evidence="2">
    <location>
        <begin position="1"/>
        <end position="42"/>
    </location>
</feature>
<feature type="region of interest" description="Disordered" evidence="2">
    <location>
        <begin position="643"/>
        <end position="664"/>
    </location>
</feature>
<feature type="region of interest" description="Disordered" evidence="2">
    <location>
        <begin position="730"/>
        <end position="759"/>
    </location>
</feature>
<feature type="coiled-coil region" evidence="1">
    <location>
        <begin position="49"/>
        <end position="121"/>
    </location>
</feature>
<feature type="compositionally biased region" description="Basic and acidic residues" evidence="2">
    <location>
        <begin position="730"/>
        <end position="744"/>
    </location>
</feature>
<feature type="compositionally biased region" description="Basic residues" evidence="2">
    <location>
        <begin position="745"/>
        <end position="758"/>
    </location>
</feature>
<feature type="sequence variant" id="VAR_027363" description="In dbSNP:rs11225086.">
    <original>A</original>
    <variation>T</variation>
    <location>
        <position position="178"/>
    </location>
</feature>
<feature type="sequence variant" id="VAR_027364" description="In dbSNP:rs7926728.">
    <original>C</original>
    <variation>G</variation>
    <location>
        <position position="238"/>
    </location>
</feature>
<feature type="sequence variant" id="VAR_027365" description="In dbSNP:rs11225089.">
    <original>S</original>
    <variation>Y</variation>
    <location>
        <position position="275"/>
    </location>
</feature>
<feature type="sequence variant" id="VAR_027366" description="In dbSNP:rs11225090.">
    <original>I</original>
    <variation>T</variation>
    <location>
        <position position="281"/>
    </location>
</feature>
<feature type="sequence variant" id="VAR_027367" description="In dbSNP:rs11225091.">
    <original>A</original>
    <variation>T</variation>
    <location>
        <position position="302"/>
    </location>
</feature>
<feature type="sequence variant" id="VAR_068173" description="Probable risk factor for monomelic amyotrophy; dbSNP:rs76022391." evidence="6">
    <original>G</original>
    <variation>S</variation>
    <location>
        <position position="668"/>
    </location>
</feature>
<feature type="sequence variant" id="VAR_027368" description="In dbSNP:rs7109614.">
    <original>P</original>
    <variation>S</variation>
    <location>
        <position position="710"/>
    </location>
</feature>
<feature type="sequence variant" id="VAR_027369" description="In dbSNP:rs7111429.">
    <original>M</original>
    <variation>T</variation>
    <location>
        <position position="1021"/>
    </location>
</feature>
<feature type="sequence variant" id="VAR_027370" description="In dbSNP:rs6590942." evidence="3 4">
    <original>S</original>
    <variation>N</variation>
    <location>
        <position position="1077"/>
    </location>
</feature>
<name>CE126_HUMAN</name>
<evidence type="ECO:0000255" key="1"/>
<evidence type="ECO:0000256" key="2">
    <source>
        <dbReference type="SAM" id="MobiDB-lite"/>
    </source>
</evidence>
<evidence type="ECO:0000269" key="3">
    <source>
    </source>
</evidence>
<evidence type="ECO:0000269" key="4">
    <source>
    </source>
</evidence>
<evidence type="ECO:0000269" key="5">
    <source>
    </source>
</evidence>
<evidence type="ECO:0000269" key="6">
    <source>
    </source>
</evidence>
<evidence type="ECO:0000269" key="7">
    <source>
    </source>
</evidence>
<evidence type="ECO:0000303" key="8">
    <source>
    </source>
</evidence>
<evidence type="ECO:0000305" key="9">
    <source>
    </source>
</evidence>
<evidence type="ECO:0000312" key="10">
    <source>
        <dbReference type="HGNC" id="HGNC:29264"/>
    </source>
</evidence>
<proteinExistence type="evidence at protein level"/>
<comment type="function">
    <text evidence="5 7">Participates in cytokinesis (PubMed:19799413). Necessary for microtubules and mitotic spindle organization (PubMed:24867236). Involved in primary cilium formation (PubMed:24867236).</text>
</comment>
<comment type="subunit">
    <text evidence="7">Interacts with DCTN1.</text>
</comment>
<comment type="interaction">
    <interactant intactId="EBI-473176">
        <id>Q9P2H0</id>
    </interactant>
    <interactant intactId="EBI-473181">
        <id>Q99728</id>
        <label>BARD1</label>
    </interactant>
    <organismsDiffer>false</organismsDiffer>
    <experiments>2</experiments>
</comment>
<comment type="interaction">
    <interactant intactId="EBI-473176">
        <id>Q9P2H0</id>
    </interactant>
    <interactant intactId="EBI-396435">
        <id>Q99689</id>
        <label>FEZ1</label>
    </interactant>
    <organismsDiffer>false</organismsDiffer>
    <experiments>2</experiments>
</comment>
<comment type="interaction">
    <interactant intactId="EBI-473176">
        <id>Q9P2H0</id>
    </interactant>
    <interactant intactId="EBI-448202">
        <id>O95257</id>
        <label>GADD45G</label>
    </interactant>
    <organismsDiffer>false</organismsDiffer>
    <experiments>2</experiments>
</comment>
<comment type="interaction">
    <interactant intactId="EBI-473176">
        <id>Q9P2H0</id>
    </interactant>
    <interactant intactId="EBI-466061">
        <id>Q9Y2X7</id>
        <label>GIT1</label>
    </interactant>
    <organismsDiffer>false</organismsDiffer>
    <experiments>2</experiments>
</comment>
<comment type="interaction">
    <interactant intactId="EBI-473176">
        <id>Q9P2H0</id>
    </interactant>
    <interactant intactId="EBI-466029">
        <id>P42858</id>
        <label>HTT</label>
    </interactant>
    <organismsDiffer>false</organismsDiffer>
    <experiments>2</experiments>
</comment>
<comment type="interaction">
    <interactant intactId="EBI-473176">
        <id>Q9P2H0</id>
    </interactant>
    <interactant intactId="EBI-399080">
        <id>Q92993</id>
        <label>KAT5</label>
    </interactant>
    <organismsDiffer>false</organismsDiffer>
    <experiments>2</experiments>
</comment>
<comment type="interaction">
    <interactant intactId="EBI-473176">
        <id>Q9P2H0</id>
    </interactant>
    <interactant intactId="EBI-473199">
        <id>O95251</id>
        <label>KAT7</label>
    </interactant>
    <organismsDiffer>false</organismsDiffer>
    <experiments>2</experiments>
</comment>
<comment type="subcellular location">
    <subcellularLocation>
        <location evidence="5 7">Midbody</location>
    </subcellularLocation>
    <subcellularLocation>
        <location evidence="7">Cytoplasm</location>
        <location evidence="7">Cytoskeleton</location>
        <location evidence="7">Microtubule organizing center</location>
        <location evidence="7">Centrosome</location>
    </subcellularLocation>
    <subcellularLocation>
        <location evidence="7">Cytoplasm</location>
        <location evidence="7">Cytoskeleton</location>
        <location evidence="7">Cilium basal body</location>
    </subcellularLocation>
</comment>
<comment type="tissue specificity">
    <text evidence="3">Expressed in brain, lung, skeletal muscle, kidney, pancreas, testis and ovary.</text>
</comment>
<comment type="miscellaneous">
    <text evidence="9">Depletion of CEP126 by siRNA results in an increase in cytokinesis aberrant cells.</text>
</comment>
<dbReference type="EMBL" id="AP003383">
    <property type="status" value="NOT_ANNOTATED_CDS"/>
    <property type="molecule type" value="Genomic_DNA"/>
</dbReference>
<dbReference type="EMBL" id="AB037798">
    <property type="protein sequence ID" value="BAA92615.1"/>
    <property type="molecule type" value="mRNA"/>
</dbReference>
<dbReference type="CCDS" id="CCDS31658.1"/>
<dbReference type="RefSeq" id="NP_065853.3">
    <property type="nucleotide sequence ID" value="NM_020802.4"/>
</dbReference>
<dbReference type="SMR" id="Q9P2H0"/>
<dbReference type="BioGRID" id="121617">
    <property type="interactions" value="83"/>
</dbReference>
<dbReference type="FunCoup" id="Q9P2H0">
    <property type="interactions" value="150"/>
</dbReference>
<dbReference type="IntAct" id="Q9P2H0">
    <property type="interactions" value="97"/>
</dbReference>
<dbReference type="MINT" id="Q9P2H0"/>
<dbReference type="STRING" id="9606.ENSP00000263468"/>
<dbReference type="GlyGen" id="Q9P2H0">
    <property type="glycosylation" value="1 site, 1 O-linked glycan (1 site)"/>
</dbReference>
<dbReference type="iPTMnet" id="Q9P2H0"/>
<dbReference type="PhosphoSitePlus" id="Q9P2H0"/>
<dbReference type="BioMuta" id="CEP126"/>
<dbReference type="DMDM" id="296439319"/>
<dbReference type="jPOST" id="Q9P2H0"/>
<dbReference type="MassIVE" id="Q9P2H0"/>
<dbReference type="PaxDb" id="9606-ENSP00000263468"/>
<dbReference type="PeptideAtlas" id="Q9P2H0"/>
<dbReference type="ProteomicsDB" id="83815"/>
<dbReference type="Antibodypedia" id="51505">
    <property type="antibodies" value="30 antibodies from 8 providers"/>
</dbReference>
<dbReference type="DNASU" id="57562"/>
<dbReference type="Ensembl" id="ENST00000263468.13">
    <property type="protein sequence ID" value="ENSP00000263468.8"/>
    <property type="gene ID" value="ENSG00000110318.15"/>
</dbReference>
<dbReference type="GeneID" id="57562"/>
<dbReference type="KEGG" id="hsa:57562"/>
<dbReference type="MANE-Select" id="ENST00000263468.13">
    <property type="protein sequence ID" value="ENSP00000263468.8"/>
    <property type="RefSeq nucleotide sequence ID" value="NM_020802.4"/>
    <property type="RefSeq protein sequence ID" value="NP_065853.3"/>
</dbReference>
<dbReference type="UCSC" id="uc001pgm.4">
    <property type="organism name" value="human"/>
</dbReference>
<dbReference type="AGR" id="HGNC:29264"/>
<dbReference type="CTD" id="57562"/>
<dbReference type="DisGeNET" id="57562"/>
<dbReference type="GeneCards" id="CEP126"/>
<dbReference type="HGNC" id="HGNC:29264">
    <property type="gene designation" value="CEP126"/>
</dbReference>
<dbReference type="HPA" id="ENSG00000110318">
    <property type="expression patterns" value="Tissue enhanced (choroid)"/>
</dbReference>
<dbReference type="MalaCards" id="CEP126"/>
<dbReference type="MIM" id="614634">
    <property type="type" value="gene"/>
</dbReference>
<dbReference type="neXtProt" id="NX_Q9P2H0"/>
<dbReference type="OpenTargets" id="ENSG00000110318"/>
<dbReference type="Orphanet" id="65684">
    <property type="disease" value="Monomelic amyotrophy"/>
</dbReference>
<dbReference type="PharmGKB" id="PA143485517"/>
<dbReference type="VEuPathDB" id="HostDB:ENSG00000110318"/>
<dbReference type="eggNOG" id="ENOG502QR78">
    <property type="taxonomic scope" value="Eukaryota"/>
</dbReference>
<dbReference type="GeneTree" id="ENSGT00390000013786"/>
<dbReference type="HOGENOM" id="CLU_010202_0_0_1"/>
<dbReference type="InParanoid" id="Q9P2H0"/>
<dbReference type="OMA" id="HISKPNV"/>
<dbReference type="OrthoDB" id="9900339at2759"/>
<dbReference type="PAN-GO" id="Q9P2H0">
    <property type="GO annotations" value="5 GO annotations based on evolutionary models"/>
</dbReference>
<dbReference type="PhylomeDB" id="Q9P2H0"/>
<dbReference type="TreeFam" id="TF336632"/>
<dbReference type="PathwayCommons" id="Q9P2H0"/>
<dbReference type="SignaLink" id="Q9P2H0"/>
<dbReference type="BioGRID-ORCS" id="57562">
    <property type="hits" value="16 hits in 1151 CRISPR screens"/>
</dbReference>
<dbReference type="ChiTaRS" id="CEP126">
    <property type="organism name" value="human"/>
</dbReference>
<dbReference type="GeneWiki" id="KIAA1377"/>
<dbReference type="GenomeRNAi" id="57562"/>
<dbReference type="Pharos" id="Q9P2H0">
    <property type="development level" value="Tdark"/>
</dbReference>
<dbReference type="PRO" id="PR:Q9P2H0"/>
<dbReference type="Proteomes" id="UP000005640">
    <property type="component" value="Chromosome 11"/>
</dbReference>
<dbReference type="RNAct" id="Q9P2H0">
    <property type="molecule type" value="protein"/>
</dbReference>
<dbReference type="Bgee" id="ENSG00000110318">
    <property type="expression patterns" value="Expressed in bronchial epithelial cell and 175 other cell types or tissues"/>
</dbReference>
<dbReference type="ExpressionAtlas" id="Q9P2H0">
    <property type="expression patterns" value="baseline and differential"/>
</dbReference>
<dbReference type="GO" id="GO:0005813">
    <property type="term" value="C:centrosome"/>
    <property type="evidence" value="ECO:0000314"/>
    <property type="project" value="UniProtKB"/>
</dbReference>
<dbReference type="GO" id="GO:0097546">
    <property type="term" value="C:ciliary base"/>
    <property type="evidence" value="ECO:0000314"/>
    <property type="project" value="UniProtKB"/>
</dbReference>
<dbReference type="GO" id="GO:0005737">
    <property type="term" value="C:cytoplasm"/>
    <property type="evidence" value="ECO:0007669"/>
    <property type="project" value="UniProtKB-KW"/>
</dbReference>
<dbReference type="GO" id="GO:0030496">
    <property type="term" value="C:midbody"/>
    <property type="evidence" value="ECO:0000314"/>
    <property type="project" value="HGNC"/>
</dbReference>
<dbReference type="GO" id="GO:0060271">
    <property type="term" value="P:cilium assembly"/>
    <property type="evidence" value="ECO:0000315"/>
    <property type="project" value="UniProtKB"/>
</dbReference>
<dbReference type="GO" id="GO:0031122">
    <property type="term" value="P:cytoplasmic microtubule organization"/>
    <property type="evidence" value="ECO:0000315"/>
    <property type="project" value="UniProtKB"/>
</dbReference>
<dbReference type="GO" id="GO:0007052">
    <property type="term" value="P:mitotic spindle organization"/>
    <property type="evidence" value="ECO:0000315"/>
    <property type="project" value="UniProtKB"/>
</dbReference>
<dbReference type="GO" id="GO:1905515">
    <property type="term" value="P:non-motile cilium assembly"/>
    <property type="evidence" value="ECO:0007669"/>
    <property type="project" value="InterPro"/>
</dbReference>
<dbReference type="InterPro" id="IPR028257">
    <property type="entry name" value="CEP126"/>
</dbReference>
<dbReference type="PANTHER" id="PTHR31191">
    <property type="entry name" value="CENTROSOMAL PROTEIN CEP126"/>
    <property type="match status" value="1"/>
</dbReference>
<dbReference type="PANTHER" id="PTHR31191:SF4">
    <property type="entry name" value="CENTROSOMAL PROTEIN OF 126 KDA"/>
    <property type="match status" value="1"/>
</dbReference>
<dbReference type="Pfam" id="PF15352">
    <property type="entry name" value="K1377"/>
    <property type="match status" value="1"/>
</dbReference>
<keyword id="KW-0966">Cell projection</keyword>
<keyword id="KW-0970">Cilium biogenesis/degradation</keyword>
<keyword id="KW-0175">Coiled coil</keyword>
<keyword id="KW-0963">Cytoplasm</keyword>
<keyword id="KW-0206">Cytoskeleton</keyword>
<keyword id="KW-1267">Proteomics identification</keyword>
<keyword id="KW-1185">Reference proteome</keyword>
<accession>Q9P2H0</accession>
<accession>Q4G0U6</accession>
<gene>
    <name evidence="8 10" type="primary">CEP126</name>
    <name type="synonym">KIAA1377</name>
</gene>
<reference key="1">
    <citation type="journal article" date="2006" name="Nature">
        <title>Human chromosome 11 DNA sequence and analysis including novel gene identification.</title>
        <authorList>
            <person name="Taylor T.D."/>
            <person name="Noguchi H."/>
            <person name="Totoki Y."/>
            <person name="Toyoda A."/>
            <person name="Kuroki Y."/>
            <person name="Dewar K."/>
            <person name="Lloyd C."/>
            <person name="Itoh T."/>
            <person name="Takeda T."/>
            <person name="Kim D.-W."/>
            <person name="She X."/>
            <person name="Barlow K.F."/>
            <person name="Bloom T."/>
            <person name="Bruford E."/>
            <person name="Chang J.L."/>
            <person name="Cuomo C.A."/>
            <person name="Eichler E."/>
            <person name="FitzGerald M.G."/>
            <person name="Jaffe D.B."/>
            <person name="LaButti K."/>
            <person name="Nicol R."/>
            <person name="Park H.-S."/>
            <person name="Seaman C."/>
            <person name="Sougnez C."/>
            <person name="Yang X."/>
            <person name="Zimmer A.R."/>
            <person name="Zody M.C."/>
            <person name="Birren B.W."/>
            <person name="Nusbaum C."/>
            <person name="Fujiyama A."/>
            <person name="Hattori M."/>
            <person name="Rogers J."/>
            <person name="Lander E.S."/>
            <person name="Sakaki Y."/>
        </authorList>
    </citation>
    <scope>NUCLEOTIDE SEQUENCE [LARGE SCALE GENOMIC DNA]</scope>
    <scope>VARIANT ASN-1077</scope>
</reference>
<reference key="2">
    <citation type="journal article" date="2000" name="DNA Res.">
        <title>Prediction of the coding sequences of unidentified human genes. XVI. The complete sequences of 150 new cDNA clones from brain which code for large proteins in vitro.</title>
        <authorList>
            <person name="Nagase T."/>
            <person name="Kikuno R."/>
            <person name="Ishikawa K."/>
            <person name="Hirosawa M."/>
            <person name="Ohara O."/>
        </authorList>
    </citation>
    <scope>NUCLEOTIDE SEQUENCE [LARGE SCALE MRNA] OF 130-1117</scope>
    <scope>TISSUE SPECIFICITY</scope>
    <scope>VARIANT ASN-1077</scope>
    <source>
        <tissue>Brain</tissue>
    </source>
</reference>
<reference key="3">
    <citation type="journal article" date="2009" name="J. Proteome Res.">
        <title>From midbody protein-protein interaction network construction to novel regulators in cytokinesis.</title>
        <authorList>
            <person name="Chen T.C."/>
            <person name="Lee S.A."/>
            <person name="Hong T.M."/>
            <person name="Shih J.Y."/>
            <person name="Lai J.M."/>
            <person name="Chiou H.Y."/>
            <person name="Yang S.C."/>
            <person name="Chan C.H."/>
            <person name="Kao C.Y."/>
            <person name="Yang P.C."/>
            <person name="Huang C.Y."/>
        </authorList>
    </citation>
    <scope>FUNCTION</scope>
    <scope>SUBCELLULAR LOCATION</scope>
</reference>
<reference key="4">
    <citation type="journal article" date="2014" name="Biol. Cell">
        <title>Cep126 is required for pericentriolar satellite localisation to the centrosome and for primary cilium formation.</title>
        <authorList>
            <person name="Bonavita R."/>
            <person name="Walas D."/>
            <person name="Brown A.K."/>
            <person name="Luini A."/>
            <person name="Stephens D.J."/>
            <person name="Colanzi A."/>
        </authorList>
    </citation>
    <scope>FUNCTION</scope>
    <scope>SUBCELLULAR LOCATION</scope>
    <scope>INTERACTION WITH DCTN1</scope>
</reference>
<reference key="5">
    <citation type="journal article" date="2012" name="Neuromuscul. Disord.">
        <title>Exome sequencing identifies KIAA1377 and C5orf42 as susceptibility genes for monomelic amyotrophy.</title>
        <authorList>
            <person name="Lim Y.M."/>
            <person name="Koh I."/>
            <person name="Park Y.M."/>
            <person name="Kim J.J."/>
            <person name="Kim D.S."/>
            <person name="Kim H.J."/>
            <person name="Baik K.H."/>
            <person name="Choi H.Y."/>
            <person name="Yang G.S."/>
            <person name="Also-Rallo E."/>
            <person name="Tizzano E.F."/>
            <person name="Gamez J."/>
            <person name="Park K."/>
            <person name="Yoo H.W."/>
            <person name="Lee J.K."/>
            <person name="Kim K.K."/>
        </authorList>
    </citation>
    <scope>VARIANT SER-668</scope>
</reference>
<protein>
    <recommendedName>
        <fullName evidence="8 10">Centrosomal protein of 126 kDa</fullName>
    </recommendedName>
</protein>